<name>BPT_CAMJ8</name>
<reference key="1">
    <citation type="journal article" date="2007" name="J. Bacteriol.">
        <title>The complete genome sequence of Campylobacter jejuni strain 81116 (NCTC11828).</title>
        <authorList>
            <person name="Pearson B.M."/>
            <person name="Gaskin D.J.H."/>
            <person name="Segers R.P.A.M."/>
            <person name="Wells J.M."/>
            <person name="Nuijten P.J.M."/>
            <person name="van Vliet A.H.M."/>
        </authorList>
    </citation>
    <scope>NUCLEOTIDE SEQUENCE [LARGE SCALE GENOMIC DNA]</scope>
    <source>
        <strain>81116 / NCTC 11828</strain>
    </source>
</reference>
<sequence length="239" mass="29019">MLEIGFCTLEDQCPYLKDKRSRIEYKYIENCSKEINNELIKRGWRRFGRYFSRPICKDCDECLSLRILVNEYNFSRSERRVINKNINTKVILRTPNLSNEHLFLYDKYHRFMEEKKNWKRYDLSFKQYYNLYVDGFMNFGYELAFYIEDKLVCVDLIDILEDGISSIYCFYDPDFSYFSLGKFSLLNEIQIAKKMNLDYIYLGYFVKKCQSLSYKADYTPNEILKGTKELFENEVLWEK</sequence>
<accession>A8FM84</accession>
<evidence type="ECO:0000255" key="1">
    <source>
        <dbReference type="HAMAP-Rule" id="MF_00689"/>
    </source>
</evidence>
<feature type="chain" id="PRO_1000072741" description="Aspartate/glutamate leucyltransferase">
    <location>
        <begin position="1"/>
        <end position="239"/>
    </location>
</feature>
<gene>
    <name evidence="1" type="primary">bpt</name>
    <name type="ordered locus">C8J_0972</name>
</gene>
<protein>
    <recommendedName>
        <fullName evidence="1">Aspartate/glutamate leucyltransferase</fullName>
        <ecNumber evidence="1">2.3.2.29</ecNumber>
    </recommendedName>
</protein>
<keyword id="KW-0012">Acyltransferase</keyword>
<keyword id="KW-0963">Cytoplasm</keyword>
<keyword id="KW-0808">Transferase</keyword>
<proteinExistence type="inferred from homology"/>
<comment type="function">
    <text evidence="1">Functions in the N-end rule pathway of protein degradation where it conjugates Leu from its aminoacyl-tRNA to the N-termini of proteins containing an N-terminal aspartate or glutamate.</text>
</comment>
<comment type="catalytic activity">
    <reaction evidence="1">
        <text>N-terminal L-glutamyl-[protein] + L-leucyl-tRNA(Leu) = N-terminal L-leucyl-L-glutamyl-[protein] + tRNA(Leu) + H(+)</text>
        <dbReference type="Rhea" id="RHEA:50412"/>
        <dbReference type="Rhea" id="RHEA-COMP:9613"/>
        <dbReference type="Rhea" id="RHEA-COMP:9622"/>
        <dbReference type="Rhea" id="RHEA-COMP:12664"/>
        <dbReference type="Rhea" id="RHEA-COMP:12668"/>
        <dbReference type="ChEBI" id="CHEBI:15378"/>
        <dbReference type="ChEBI" id="CHEBI:64721"/>
        <dbReference type="ChEBI" id="CHEBI:78442"/>
        <dbReference type="ChEBI" id="CHEBI:78494"/>
        <dbReference type="ChEBI" id="CHEBI:133041"/>
        <dbReference type="EC" id="2.3.2.29"/>
    </reaction>
</comment>
<comment type="catalytic activity">
    <reaction evidence="1">
        <text>N-terminal L-aspartyl-[protein] + L-leucyl-tRNA(Leu) = N-terminal L-leucyl-L-aspartyl-[protein] + tRNA(Leu) + H(+)</text>
        <dbReference type="Rhea" id="RHEA:50420"/>
        <dbReference type="Rhea" id="RHEA-COMP:9613"/>
        <dbReference type="Rhea" id="RHEA-COMP:9622"/>
        <dbReference type="Rhea" id="RHEA-COMP:12669"/>
        <dbReference type="Rhea" id="RHEA-COMP:12674"/>
        <dbReference type="ChEBI" id="CHEBI:15378"/>
        <dbReference type="ChEBI" id="CHEBI:64720"/>
        <dbReference type="ChEBI" id="CHEBI:78442"/>
        <dbReference type="ChEBI" id="CHEBI:78494"/>
        <dbReference type="ChEBI" id="CHEBI:133042"/>
        <dbReference type="EC" id="2.3.2.29"/>
    </reaction>
</comment>
<comment type="subcellular location">
    <subcellularLocation>
        <location evidence="1">Cytoplasm</location>
    </subcellularLocation>
</comment>
<comment type="similarity">
    <text evidence="1">Belongs to the R-transferase family. Bpt subfamily.</text>
</comment>
<dbReference type="EC" id="2.3.2.29" evidence="1"/>
<dbReference type="EMBL" id="CP000814">
    <property type="protein sequence ID" value="ABV52571.1"/>
    <property type="molecule type" value="Genomic_DNA"/>
</dbReference>
<dbReference type="RefSeq" id="WP_002866068.1">
    <property type="nucleotide sequence ID" value="NC_009839.1"/>
</dbReference>
<dbReference type="SMR" id="A8FM84"/>
<dbReference type="KEGG" id="cju:C8J_0972"/>
<dbReference type="HOGENOM" id="CLU_077607_0_0_7"/>
<dbReference type="GO" id="GO:0005737">
    <property type="term" value="C:cytoplasm"/>
    <property type="evidence" value="ECO:0007669"/>
    <property type="project" value="UniProtKB-SubCell"/>
</dbReference>
<dbReference type="GO" id="GO:0004057">
    <property type="term" value="F:arginyl-tRNA--protein transferase activity"/>
    <property type="evidence" value="ECO:0007669"/>
    <property type="project" value="InterPro"/>
</dbReference>
<dbReference type="GO" id="GO:0008914">
    <property type="term" value="F:leucyl-tRNA--protein transferase activity"/>
    <property type="evidence" value="ECO:0007669"/>
    <property type="project" value="UniProtKB-UniRule"/>
</dbReference>
<dbReference type="GO" id="GO:0071596">
    <property type="term" value="P:ubiquitin-dependent protein catabolic process via the N-end rule pathway"/>
    <property type="evidence" value="ECO:0007669"/>
    <property type="project" value="InterPro"/>
</dbReference>
<dbReference type="HAMAP" id="MF_00689">
    <property type="entry name" value="Bpt"/>
    <property type="match status" value="1"/>
</dbReference>
<dbReference type="InterPro" id="IPR016181">
    <property type="entry name" value="Acyl_CoA_acyltransferase"/>
</dbReference>
<dbReference type="InterPro" id="IPR017138">
    <property type="entry name" value="Asp_Glu_LeuTrfase"/>
</dbReference>
<dbReference type="InterPro" id="IPR030700">
    <property type="entry name" value="N-end_Aminoacyl_Trfase"/>
</dbReference>
<dbReference type="InterPro" id="IPR007472">
    <property type="entry name" value="N-end_Aminoacyl_Trfase_C"/>
</dbReference>
<dbReference type="InterPro" id="IPR007471">
    <property type="entry name" value="N-end_Aminoacyl_Trfase_N"/>
</dbReference>
<dbReference type="NCBIfam" id="NF002344">
    <property type="entry name" value="PRK01305.2-1"/>
    <property type="match status" value="1"/>
</dbReference>
<dbReference type="NCBIfam" id="NF002346">
    <property type="entry name" value="PRK01305.2-3"/>
    <property type="match status" value="1"/>
</dbReference>
<dbReference type="PANTHER" id="PTHR21367">
    <property type="entry name" value="ARGININE-TRNA-PROTEIN TRANSFERASE 1"/>
    <property type="match status" value="1"/>
</dbReference>
<dbReference type="PANTHER" id="PTHR21367:SF1">
    <property type="entry name" value="ARGINYL-TRNA--PROTEIN TRANSFERASE 1"/>
    <property type="match status" value="1"/>
</dbReference>
<dbReference type="Pfam" id="PF04377">
    <property type="entry name" value="ATE_C"/>
    <property type="match status" value="1"/>
</dbReference>
<dbReference type="Pfam" id="PF04376">
    <property type="entry name" value="ATE_N"/>
    <property type="match status" value="1"/>
</dbReference>
<dbReference type="PIRSF" id="PIRSF037208">
    <property type="entry name" value="ATE_pro_prd"/>
    <property type="match status" value="1"/>
</dbReference>
<dbReference type="SUPFAM" id="SSF55729">
    <property type="entry name" value="Acyl-CoA N-acyltransferases (Nat)"/>
    <property type="match status" value="1"/>
</dbReference>
<organism>
    <name type="scientific">Campylobacter jejuni subsp. jejuni serotype O:6 (strain 81116 / NCTC 11828)</name>
    <dbReference type="NCBI Taxonomy" id="407148"/>
    <lineage>
        <taxon>Bacteria</taxon>
        <taxon>Pseudomonadati</taxon>
        <taxon>Campylobacterota</taxon>
        <taxon>Epsilonproteobacteria</taxon>
        <taxon>Campylobacterales</taxon>
        <taxon>Campylobacteraceae</taxon>
        <taxon>Campylobacter</taxon>
    </lineage>
</organism>